<comment type="function">
    <text evidence="1">Involved in the gluconeogenesis. Catalyzes stereospecifically the conversion of dihydroxyacetone phosphate (DHAP) to D-glyceraldehyde-3-phosphate (G3P).</text>
</comment>
<comment type="catalytic activity">
    <reaction evidence="1">
        <text>D-glyceraldehyde 3-phosphate = dihydroxyacetone phosphate</text>
        <dbReference type="Rhea" id="RHEA:18585"/>
        <dbReference type="ChEBI" id="CHEBI:57642"/>
        <dbReference type="ChEBI" id="CHEBI:59776"/>
        <dbReference type="EC" id="5.3.1.1"/>
    </reaction>
</comment>
<comment type="pathway">
    <text evidence="1">Carbohydrate biosynthesis; gluconeogenesis.</text>
</comment>
<comment type="pathway">
    <text evidence="1">Carbohydrate degradation; glycolysis; D-glyceraldehyde 3-phosphate from glycerone phosphate: step 1/1.</text>
</comment>
<comment type="subunit">
    <text evidence="1">Homodimer.</text>
</comment>
<comment type="subcellular location">
    <subcellularLocation>
        <location evidence="1">Cytoplasm</location>
    </subcellularLocation>
</comment>
<comment type="similarity">
    <text evidence="1">Belongs to the triosephosphate isomerase family.</text>
</comment>
<sequence length="246" mass="27602">MPKKFIVANWKMHKTVREALAFLDEFIPITKGLNGREIGIAPTFICIESVGKVLINTSIKLCAQNAFYENKGAYTGEVSPAMLKDCGVEYVIIGHSERRKYFYENDDIINKKIHACIKEGLKVIFCIGETFEDRQNNKTMEILKTQIRNGLLEINSPEALTIAYEPVWAIGTGVVATEEQIKQSHLFIRNQLKEIYGERANEVRILYGGSVTPENIKSIMAIDNVEGVLVGGASLDPLKFAKIVKY</sequence>
<accession>B5YL53</accession>
<proteinExistence type="inferred from homology"/>
<name>TPIS_THEYD</name>
<dbReference type="EC" id="5.3.1.1" evidence="1"/>
<dbReference type="EMBL" id="CP001147">
    <property type="protein sequence ID" value="ACI20863.1"/>
    <property type="molecule type" value="Genomic_DNA"/>
</dbReference>
<dbReference type="RefSeq" id="WP_012545593.1">
    <property type="nucleotide sequence ID" value="NC_011296.1"/>
</dbReference>
<dbReference type="RefSeq" id="YP_002248968.1">
    <property type="nucleotide sequence ID" value="NC_011296.1"/>
</dbReference>
<dbReference type="SMR" id="B5YL53"/>
<dbReference type="FunCoup" id="B5YL53">
    <property type="interactions" value="427"/>
</dbReference>
<dbReference type="STRING" id="289376.THEYE_A1144"/>
<dbReference type="EnsemblBacteria" id="ACI20863">
    <property type="protein sequence ID" value="ACI20863"/>
    <property type="gene ID" value="THEYE_A1144"/>
</dbReference>
<dbReference type="KEGG" id="tye:THEYE_A1144"/>
<dbReference type="PATRIC" id="fig|289376.4.peg.1122"/>
<dbReference type="eggNOG" id="COG0149">
    <property type="taxonomic scope" value="Bacteria"/>
</dbReference>
<dbReference type="HOGENOM" id="CLU_024251_2_3_0"/>
<dbReference type="InParanoid" id="B5YL53"/>
<dbReference type="OrthoDB" id="9809429at2"/>
<dbReference type="UniPathway" id="UPA00109">
    <property type="reaction ID" value="UER00189"/>
</dbReference>
<dbReference type="UniPathway" id="UPA00138"/>
<dbReference type="Proteomes" id="UP000000718">
    <property type="component" value="Chromosome"/>
</dbReference>
<dbReference type="GO" id="GO:0005829">
    <property type="term" value="C:cytosol"/>
    <property type="evidence" value="ECO:0000318"/>
    <property type="project" value="GO_Central"/>
</dbReference>
<dbReference type="GO" id="GO:0004807">
    <property type="term" value="F:triose-phosphate isomerase activity"/>
    <property type="evidence" value="ECO:0000318"/>
    <property type="project" value="GO_Central"/>
</dbReference>
<dbReference type="GO" id="GO:0006094">
    <property type="term" value="P:gluconeogenesis"/>
    <property type="evidence" value="ECO:0000318"/>
    <property type="project" value="GO_Central"/>
</dbReference>
<dbReference type="GO" id="GO:0046166">
    <property type="term" value="P:glyceraldehyde-3-phosphate biosynthetic process"/>
    <property type="evidence" value="ECO:0000318"/>
    <property type="project" value="GO_Central"/>
</dbReference>
<dbReference type="GO" id="GO:0019563">
    <property type="term" value="P:glycerol catabolic process"/>
    <property type="evidence" value="ECO:0000318"/>
    <property type="project" value="GO_Central"/>
</dbReference>
<dbReference type="GO" id="GO:0006096">
    <property type="term" value="P:glycolytic process"/>
    <property type="evidence" value="ECO:0000318"/>
    <property type="project" value="GO_Central"/>
</dbReference>
<dbReference type="CDD" id="cd00311">
    <property type="entry name" value="TIM"/>
    <property type="match status" value="1"/>
</dbReference>
<dbReference type="FunFam" id="3.20.20.70:FF:000016">
    <property type="entry name" value="Triosephosphate isomerase"/>
    <property type="match status" value="1"/>
</dbReference>
<dbReference type="Gene3D" id="3.20.20.70">
    <property type="entry name" value="Aldolase class I"/>
    <property type="match status" value="1"/>
</dbReference>
<dbReference type="HAMAP" id="MF_00147_B">
    <property type="entry name" value="TIM_B"/>
    <property type="match status" value="1"/>
</dbReference>
<dbReference type="InterPro" id="IPR013785">
    <property type="entry name" value="Aldolase_TIM"/>
</dbReference>
<dbReference type="InterPro" id="IPR035990">
    <property type="entry name" value="TIM_sf"/>
</dbReference>
<dbReference type="InterPro" id="IPR022896">
    <property type="entry name" value="TrioseP_Isoase_bac/euk"/>
</dbReference>
<dbReference type="InterPro" id="IPR000652">
    <property type="entry name" value="Triosephosphate_isomerase"/>
</dbReference>
<dbReference type="InterPro" id="IPR020861">
    <property type="entry name" value="Triosephosphate_isomerase_AS"/>
</dbReference>
<dbReference type="NCBIfam" id="TIGR00419">
    <property type="entry name" value="tim"/>
    <property type="match status" value="1"/>
</dbReference>
<dbReference type="PANTHER" id="PTHR21139">
    <property type="entry name" value="TRIOSEPHOSPHATE ISOMERASE"/>
    <property type="match status" value="1"/>
</dbReference>
<dbReference type="PANTHER" id="PTHR21139:SF42">
    <property type="entry name" value="TRIOSEPHOSPHATE ISOMERASE"/>
    <property type="match status" value="1"/>
</dbReference>
<dbReference type="Pfam" id="PF00121">
    <property type="entry name" value="TIM"/>
    <property type="match status" value="1"/>
</dbReference>
<dbReference type="SUPFAM" id="SSF51351">
    <property type="entry name" value="Triosephosphate isomerase (TIM)"/>
    <property type="match status" value="1"/>
</dbReference>
<dbReference type="PROSITE" id="PS00171">
    <property type="entry name" value="TIM_1"/>
    <property type="match status" value="1"/>
</dbReference>
<dbReference type="PROSITE" id="PS51440">
    <property type="entry name" value="TIM_2"/>
    <property type="match status" value="1"/>
</dbReference>
<organism>
    <name type="scientific">Thermodesulfovibrio yellowstonii (strain ATCC 51303 / DSM 11347 / YP87)</name>
    <dbReference type="NCBI Taxonomy" id="289376"/>
    <lineage>
        <taxon>Bacteria</taxon>
        <taxon>Pseudomonadati</taxon>
        <taxon>Nitrospirota</taxon>
        <taxon>Thermodesulfovibrionia</taxon>
        <taxon>Thermodesulfovibrionales</taxon>
        <taxon>Thermodesulfovibrionaceae</taxon>
        <taxon>Thermodesulfovibrio</taxon>
    </lineage>
</organism>
<keyword id="KW-0963">Cytoplasm</keyword>
<keyword id="KW-0312">Gluconeogenesis</keyword>
<keyword id="KW-0324">Glycolysis</keyword>
<keyword id="KW-0413">Isomerase</keyword>
<keyword id="KW-1185">Reference proteome</keyword>
<evidence type="ECO:0000255" key="1">
    <source>
        <dbReference type="HAMAP-Rule" id="MF_00147"/>
    </source>
</evidence>
<reference key="1">
    <citation type="submission" date="2008-08" db="EMBL/GenBank/DDBJ databases">
        <title>The complete genome sequence of Thermodesulfovibrio yellowstonii strain ATCC 51303 / DSM 11347 / YP87.</title>
        <authorList>
            <person name="Dodson R.J."/>
            <person name="Durkin A.S."/>
            <person name="Wu M."/>
            <person name="Eisen J."/>
            <person name="Sutton G."/>
        </authorList>
    </citation>
    <scope>NUCLEOTIDE SEQUENCE [LARGE SCALE GENOMIC DNA]</scope>
    <source>
        <strain>ATCC 51303 / DSM 11347 / YP87</strain>
    </source>
</reference>
<protein>
    <recommendedName>
        <fullName evidence="1">Triosephosphate isomerase</fullName>
        <shortName evidence="1">TIM</shortName>
        <shortName evidence="1">TPI</shortName>
        <ecNumber evidence="1">5.3.1.1</ecNumber>
    </recommendedName>
    <alternativeName>
        <fullName evidence="1">Triose-phosphate isomerase</fullName>
    </alternativeName>
</protein>
<feature type="chain" id="PRO_1000096544" description="Triosephosphate isomerase">
    <location>
        <begin position="1"/>
        <end position="246"/>
    </location>
</feature>
<feature type="active site" description="Electrophile" evidence="1">
    <location>
        <position position="95"/>
    </location>
</feature>
<feature type="active site" description="Proton acceptor" evidence="1">
    <location>
        <position position="165"/>
    </location>
</feature>
<feature type="binding site" evidence="1">
    <location>
        <begin position="9"/>
        <end position="11"/>
    </location>
    <ligand>
        <name>substrate</name>
    </ligand>
</feature>
<feature type="binding site" evidence="1">
    <location>
        <position position="171"/>
    </location>
    <ligand>
        <name>substrate</name>
    </ligand>
</feature>
<feature type="binding site" evidence="1">
    <location>
        <position position="210"/>
    </location>
    <ligand>
        <name>substrate</name>
    </ligand>
</feature>
<feature type="binding site" evidence="1">
    <location>
        <begin position="231"/>
        <end position="232"/>
    </location>
    <ligand>
        <name>substrate</name>
    </ligand>
</feature>
<gene>
    <name evidence="1" type="primary">tpiA</name>
    <name type="ordered locus">THEYE_A1144</name>
</gene>